<keyword id="KW-0378">Hydrolase</keyword>
<keyword id="KW-0460">Magnesium</keyword>
<keyword id="KW-0479">Metal-binding</keyword>
<keyword id="KW-0546">Nucleotide metabolism</keyword>
<keyword id="KW-1185">Reference proteome</keyword>
<accession>Q49992</accession>
<name>DUT_MYCLE</name>
<evidence type="ECO:0000250" key="1"/>
<evidence type="ECO:0000255" key="2">
    <source>
        <dbReference type="HAMAP-Rule" id="MF_00116"/>
    </source>
</evidence>
<evidence type="ECO:0000305" key="3"/>
<protein>
    <recommendedName>
        <fullName evidence="2">Deoxyuridine 5'-triphosphate nucleotidohydrolase</fullName>
        <shortName evidence="2">dUTPase</shortName>
        <ecNumber evidence="2">3.6.1.23</ecNumber>
    </recommendedName>
    <alternativeName>
        <fullName evidence="2">dUTP pyrophosphatase</fullName>
    </alternativeName>
</protein>
<sequence length="154" mass="15928">MSTSLAVVRLDPGLPLPSRAHDGDAGVDLYSVEDVKLAPGQRALVRTGLAVAIPFGMVGLIHPRSGLAVRVGLSIVNSPGTVDAGYRGEIKVALINLDPVEPLVVHRGDRIAQLLVQRVELVELVEVSSFDEAGLAETSRGDGGHGSSGGHASL</sequence>
<dbReference type="EC" id="3.6.1.23" evidence="2"/>
<dbReference type="EMBL" id="U15181">
    <property type="protein sequence ID" value="AAA62960.1"/>
    <property type="status" value="ALT_INIT"/>
    <property type="molecule type" value="Genomic_DNA"/>
</dbReference>
<dbReference type="EMBL" id="AL583920">
    <property type="protein sequence ID" value="CAC31409.1"/>
    <property type="molecule type" value="Genomic_DNA"/>
</dbReference>
<dbReference type="PIR" id="F87037">
    <property type="entry name" value="F87037"/>
</dbReference>
<dbReference type="RefSeq" id="NP_301761.1">
    <property type="nucleotide sequence ID" value="NC_002677.1"/>
</dbReference>
<dbReference type="RefSeq" id="WP_010908085.1">
    <property type="nucleotide sequence ID" value="NC_002677.1"/>
</dbReference>
<dbReference type="SMR" id="Q49992"/>
<dbReference type="STRING" id="272631.gene:17574854"/>
<dbReference type="KEGG" id="mle:ML1028"/>
<dbReference type="PATRIC" id="fig|272631.5.peg.1857"/>
<dbReference type="Leproma" id="ML1028"/>
<dbReference type="eggNOG" id="COG0756">
    <property type="taxonomic scope" value="Bacteria"/>
</dbReference>
<dbReference type="HOGENOM" id="CLU_068508_1_3_11"/>
<dbReference type="OrthoDB" id="9809956at2"/>
<dbReference type="UniPathway" id="UPA00610">
    <property type="reaction ID" value="UER00666"/>
</dbReference>
<dbReference type="Proteomes" id="UP000000806">
    <property type="component" value="Chromosome"/>
</dbReference>
<dbReference type="GO" id="GO:0004170">
    <property type="term" value="F:dUTP diphosphatase activity"/>
    <property type="evidence" value="ECO:0007669"/>
    <property type="project" value="UniProtKB-UniRule"/>
</dbReference>
<dbReference type="GO" id="GO:0000287">
    <property type="term" value="F:magnesium ion binding"/>
    <property type="evidence" value="ECO:0007669"/>
    <property type="project" value="UniProtKB-UniRule"/>
</dbReference>
<dbReference type="GO" id="GO:0006226">
    <property type="term" value="P:dUMP biosynthetic process"/>
    <property type="evidence" value="ECO:0007669"/>
    <property type="project" value="UniProtKB-UniRule"/>
</dbReference>
<dbReference type="GO" id="GO:0046081">
    <property type="term" value="P:dUTP catabolic process"/>
    <property type="evidence" value="ECO:0007669"/>
    <property type="project" value="InterPro"/>
</dbReference>
<dbReference type="CDD" id="cd07557">
    <property type="entry name" value="trimeric_dUTPase"/>
    <property type="match status" value="1"/>
</dbReference>
<dbReference type="FunFam" id="2.70.40.10:FF:000008">
    <property type="entry name" value="Deoxyuridine 5'-triphosphate nucleotidohydrolase"/>
    <property type="match status" value="1"/>
</dbReference>
<dbReference type="Gene3D" id="2.70.40.10">
    <property type="match status" value="1"/>
</dbReference>
<dbReference type="HAMAP" id="MF_00116">
    <property type="entry name" value="dUTPase_bact"/>
    <property type="match status" value="1"/>
</dbReference>
<dbReference type="InterPro" id="IPR008181">
    <property type="entry name" value="dUTPase"/>
</dbReference>
<dbReference type="InterPro" id="IPR029054">
    <property type="entry name" value="dUTPase-like"/>
</dbReference>
<dbReference type="InterPro" id="IPR036157">
    <property type="entry name" value="dUTPase-like_sf"/>
</dbReference>
<dbReference type="InterPro" id="IPR033704">
    <property type="entry name" value="dUTPase_trimeric"/>
</dbReference>
<dbReference type="NCBIfam" id="TIGR00576">
    <property type="entry name" value="dut"/>
    <property type="match status" value="1"/>
</dbReference>
<dbReference type="NCBIfam" id="NF001862">
    <property type="entry name" value="PRK00601.1"/>
    <property type="match status" value="1"/>
</dbReference>
<dbReference type="PANTHER" id="PTHR11241">
    <property type="entry name" value="DEOXYURIDINE 5'-TRIPHOSPHATE NUCLEOTIDOHYDROLASE"/>
    <property type="match status" value="1"/>
</dbReference>
<dbReference type="PANTHER" id="PTHR11241:SF0">
    <property type="entry name" value="DEOXYURIDINE 5'-TRIPHOSPHATE NUCLEOTIDOHYDROLASE"/>
    <property type="match status" value="1"/>
</dbReference>
<dbReference type="Pfam" id="PF00692">
    <property type="entry name" value="dUTPase"/>
    <property type="match status" value="1"/>
</dbReference>
<dbReference type="SUPFAM" id="SSF51283">
    <property type="entry name" value="dUTPase-like"/>
    <property type="match status" value="1"/>
</dbReference>
<reference key="1">
    <citation type="submission" date="1995-04" db="EMBL/GenBank/DDBJ databases">
        <authorList>
            <person name="Smith D.R."/>
            <person name="Robison K."/>
        </authorList>
    </citation>
    <scope>NUCLEOTIDE SEQUENCE [GENOMIC DNA]</scope>
</reference>
<reference key="2">
    <citation type="journal article" date="2001" name="Nature">
        <title>Massive gene decay in the leprosy bacillus.</title>
        <authorList>
            <person name="Cole S.T."/>
            <person name="Eiglmeier K."/>
            <person name="Parkhill J."/>
            <person name="James K.D."/>
            <person name="Thomson N.R."/>
            <person name="Wheeler P.R."/>
            <person name="Honore N."/>
            <person name="Garnier T."/>
            <person name="Churcher C.M."/>
            <person name="Harris D.E."/>
            <person name="Mungall K.L."/>
            <person name="Basham D."/>
            <person name="Brown D."/>
            <person name="Chillingworth T."/>
            <person name="Connor R."/>
            <person name="Davies R.M."/>
            <person name="Devlin K."/>
            <person name="Duthoy S."/>
            <person name="Feltwell T."/>
            <person name="Fraser A."/>
            <person name="Hamlin N."/>
            <person name="Holroyd S."/>
            <person name="Hornsby T."/>
            <person name="Jagels K."/>
            <person name="Lacroix C."/>
            <person name="Maclean J."/>
            <person name="Moule S."/>
            <person name="Murphy L.D."/>
            <person name="Oliver K."/>
            <person name="Quail M.A."/>
            <person name="Rajandream M.A."/>
            <person name="Rutherford K.M."/>
            <person name="Rutter S."/>
            <person name="Seeger K."/>
            <person name="Simon S."/>
            <person name="Simmonds M."/>
            <person name="Skelton J."/>
            <person name="Squares R."/>
            <person name="Squares S."/>
            <person name="Stevens K."/>
            <person name="Taylor K."/>
            <person name="Whitehead S."/>
            <person name="Woodward J.R."/>
            <person name="Barrell B.G."/>
        </authorList>
    </citation>
    <scope>NUCLEOTIDE SEQUENCE [LARGE SCALE GENOMIC DNA]</scope>
    <source>
        <strain>TN</strain>
    </source>
</reference>
<gene>
    <name evidence="2" type="primary">dut</name>
    <name type="ordered locus">ML1028</name>
</gene>
<proteinExistence type="inferred from homology"/>
<organism>
    <name type="scientific">Mycobacterium leprae (strain TN)</name>
    <dbReference type="NCBI Taxonomy" id="272631"/>
    <lineage>
        <taxon>Bacteria</taxon>
        <taxon>Bacillati</taxon>
        <taxon>Actinomycetota</taxon>
        <taxon>Actinomycetes</taxon>
        <taxon>Mycobacteriales</taxon>
        <taxon>Mycobacteriaceae</taxon>
        <taxon>Mycobacterium</taxon>
    </lineage>
</organism>
<comment type="function">
    <text evidence="2">This enzyme is involved in nucleotide metabolism: it produces dUMP, the immediate precursor of thymidine nucleotides and it decreases the intracellular concentration of dUTP so that uracil cannot be incorporated into DNA.</text>
</comment>
<comment type="catalytic activity">
    <reaction evidence="2">
        <text>dUTP + H2O = dUMP + diphosphate + H(+)</text>
        <dbReference type="Rhea" id="RHEA:10248"/>
        <dbReference type="ChEBI" id="CHEBI:15377"/>
        <dbReference type="ChEBI" id="CHEBI:15378"/>
        <dbReference type="ChEBI" id="CHEBI:33019"/>
        <dbReference type="ChEBI" id="CHEBI:61555"/>
        <dbReference type="ChEBI" id="CHEBI:246422"/>
        <dbReference type="EC" id="3.6.1.23"/>
    </reaction>
</comment>
<comment type="cofactor">
    <cofactor evidence="2">
        <name>Mg(2+)</name>
        <dbReference type="ChEBI" id="CHEBI:18420"/>
    </cofactor>
</comment>
<comment type="pathway">
    <text evidence="2">Pyrimidine metabolism; dUMP biosynthesis; dUMP from dCTP (dUTP route): step 2/2.</text>
</comment>
<comment type="subunit">
    <text evidence="2">Homotrimer.</text>
</comment>
<comment type="miscellaneous">
    <text evidence="1">Each trimer binds three substrate molecules. The ligands are bound between subunits, and for each substrate molecule, residues from adjacent subunits contribute to the binding interactions (By similarity).</text>
</comment>
<comment type="similarity">
    <text evidence="2">Belongs to the dUTPase family.</text>
</comment>
<comment type="sequence caution" evidence="3">
    <conflict type="erroneous initiation">
        <sequence resource="EMBL-CDS" id="AAA62960"/>
    </conflict>
</comment>
<feature type="chain" id="PRO_0000182882" description="Deoxyuridine 5'-triphosphate nucleotidohydrolase">
    <location>
        <begin position="1"/>
        <end position="154"/>
    </location>
</feature>
<feature type="binding site" evidence="2">
    <location>
        <begin position="64"/>
        <end position="66"/>
    </location>
    <ligand>
        <name>substrate</name>
    </ligand>
</feature>
<feature type="binding site" evidence="2">
    <location>
        <position position="77"/>
    </location>
    <ligand>
        <name>substrate</name>
    </ligand>
</feature>
<feature type="binding site" evidence="2">
    <location>
        <begin position="81"/>
        <end position="83"/>
    </location>
    <ligand>
        <name>substrate</name>
    </ligand>
</feature>
<feature type="binding site" evidence="2">
    <location>
        <position position="91"/>
    </location>
    <ligand>
        <name>substrate</name>
    </ligand>
</feature>